<comment type="similarity">
    <text evidence="1">Belongs to the universal ribosomal protein uL29 family.</text>
</comment>
<protein>
    <recommendedName>
        <fullName evidence="1">Large ribosomal subunit protein uL29</fullName>
    </recommendedName>
    <alternativeName>
        <fullName evidence="2">50S ribosomal protein L29</fullName>
    </alternativeName>
</protein>
<proteinExistence type="inferred from homology"/>
<sequence length="63" mass="7256">MKATELKDKSVEELNTELLNLLREQFNLRMQASTGQLEKTDQIRKVRRSIARVKTILTQKAAA</sequence>
<gene>
    <name evidence="1" type="primary">rpmC</name>
    <name type="ordered locus">Patl_0477</name>
</gene>
<accession>Q15YN1</accession>
<reference key="1">
    <citation type="submission" date="2006-06" db="EMBL/GenBank/DDBJ databases">
        <title>Complete sequence of Pseudoalteromonas atlantica T6c.</title>
        <authorList>
            <consortium name="US DOE Joint Genome Institute"/>
            <person name="Copeland A."/>
            <person name="Lucas S."/>
            <person name="Lapidus A."/>
            <person name="Barry K."/>
            <person name="Detter J.C."/>
            <person name="Glavina del Rio T."/>
            <person name="Hammon N."/>
            <person name="Israni S."/>
            <person name="Dalin E."/>
            <person name="Tice H."/>
            <person name="Pitluck S."/>
            <person name="Saunders E."/>
            <person name="Brettin T."/>
            <person name="Bruce D."/>
            <person name="Han C."/>
            <person name="Tapia R."/>
            <person name="Gilna P."/>
            <person name="Schmutz J."/>
            <person name="Larimer F."/>
            <person name="Land M."/>
            <person name="Hauser L."/>
            <person name="Kyrpides N."/>
            <person name="Kim E."/>
            <person name="Karls A.C."/>
            <person name="Bartlett D."/>
            <person name="Higgins B.P."/>
            <person name="Richardson P."/>
        </authorList>
    </citation>
    <scope>NUCLEOTIDE SEQUENCE [LARGE SCALE GENOMIC DNA]</scope>
    <source>
        <strain>T6c / ATCC BAA-1087</strain>
    </source>
</reference>
<organism>
    <name type="scientific">Pseudoalteromonas atlantica (strain T6c / ATCC BAA-1087)</name>
    <dbReference type="NCBI Taxonomy" id="3042615"/>
    <lineage>
        <taxon>Bacteria</taxon>
        <taxon>Pseudomonadati</taxon>
        <taxon>Pseudomonadota</taxon>
        <taxon>Gammaproteobacteria</taxon>
        <taxon>Alteromonadales</taxon>
        <taxon>Alteromonadaceae</taxon>
        <taxon>Paraglaciecola</taxon>
    </lineage>
</organism>
<evidence type="ECO:0000255" key="1">
    <source>
        <dbReference type="HAMAP-Rule" id="MF_00374"/>
    </source>
</evidence>
<evidence type="ECO:0000305" key="2"/>
<feature type="chain" id="PRO_1000007560" description="Large ribosomal subunit protein uL29">
    <location>
        <begin position="1"/>
        <end position="63"/>
    </location>
</feature>
<name>RL29_PSEA6</name>
<dbReference type="EMBL" id="CP000388">
    <property type="protein sequence ID" value="ABG39007.1"/>
    <property type="molecule type" value="Genomic_DNA"/>
</dbReference>
<dbReference type="RefSeq" id="WP_006992676.1">
    <property type="nucleotide sequence ID" value="NC_008228.1"/>
</dbReference>
<dbReference type="SMR" id="Q15YN1"/>
<dbReference type="STRING" id="342610.Patl_0477"/>
<dbReference type="KEGG" id="pat:Patl_0477"/>
<dbReference type="eggNOG" id="COG0255">
    <property type="taxonomic scope" value="Bacteria"/>
</dbReference>
<dbReference type="HOGENOM" id="CLU_158491_1_2_6"/>
<dbReference type="OrthoDB" id="9815192at2"/>
<dbReference type="Proteomes" id="UP000001981">
    <property type="component" value="Chromosome"/>
</dbReference>
<dbReference type="GO" id="GO:0022625">
    <property type="term" value="C:cytosolic large ribosomal subunit"/>
    <property type="evidence" value="ECO:0007669"/>
    <property type="project" value="TreeGrafter"/>
</dbReference>
<dbReference type="GO" id="GO:0003735">
    <property type="term" value="F:structural constituent of ribosome"/>
    <property type="evidence" value="ECO:0007669"/>
    <property type="project" value="InterPro"/>
</dbReference>
<dbReference type="GO" id="GO:0006412">
    <property type="term" value="P:translation"/>
    <property type="evidence" value="ECO:0007669"/>
    <property type="project" value="UniProtKB-UniRule"/>
</dbReference>
<dbReference type="CDD" id="cd00427">
    <property type="entry name" value="Ribosomal_L29_HIP"/>
    <property type="match status" value="1"/>
</dbReference>
<dbReference type="FunFam" id="1.10.287.310:FF:000001">
    <property type="entry name" value="50S ribosomal protein L29"/>
    <property type="match status" value="1"/>
</dbReference>
<dbReference type="Gene3D" id="1.10.287.310">
    <property type="match status" value="1"/>
</dbReference>
<dbReference type="HAMAP" id="MF_00374">
    <property type="entry name" value="Ribosomal_uL29"/>
    <property type="match status" value="1"/>
</dbReference>
<dbReference type="InterPro" id="IPR050063">
    <property type="entry name" value="Ribosomal_protein_uL29"/>
</dbReference>
<dbReference type="InterPro" id="IPR001854">
    <property type="entry name" value="Ribosomal_uL29"/>
</dbReference>
<dbReference type="InterPro" id="IPR036049">
    <property type="entry name" value="Ribosomal_uL29_sf"/>
</dbReference>
<dbReference type="NCBIfam" id="TIGR00012">
    <property type="entry name" value="L29"/>
    <property type="match status" value="1"/>
</dbReference>
<dbReference type="PANTHER" id="PTHR10916">
    <property type="entry name" value="60S RIBOSOMAL PROTEIN L35/50S RIBOSOMAL PROTEIN L29"/>
    <property type="match status" value="1"/>
</dbReference>
<dbReference type="PANTHER" id="PTHR10916:SF0">
    <property type="entry name" value="LARGE RIBOSOMAL SUBUNIT PROTEIN UL29C"/>
    <property type="match status" value="1"/>
</dbReference>
<dbReference type="Pfam" id="PF00831">
    <property type="entry name" value="Ribosomal_L29"/>
    <property type="match status" value="1"/>
</dbReference>
<dbReference type="SUPFAM" id="SSF46561">
    <property type="entry name" value="Ribosomal protein L29 (L29p)"/>
    <property type="match status" value="1"/>
</dbReference>
<keyword id="KW-0687">Ribonucleoprotein</keyword>
<keyword id="KW-0689">Ribosomal protein</keyword>